<evidence type="ECO:0000255" key="1">
    <source>
        <dbReference type="PROSITE-ProRule" id="PRU00042"/>
    </source>
</evidence>
<evidence type="ECO:0000256" key="2">
    <source>
        <dbReference type="SAM" id="MobiDB-lite"/>
    </source>
</evidence>
<evidence type="ECO:0000269" key="3">
    <source>
    </source>
</evidence>
<evidence type="ECO:0000269" key="4">
    <source>
    </source>
</evidence>
<evidence type="ECO:0000269" key="5">
    <source>
    </source>
</evidence>
<evidence type="ECO:0000305" key="6"/>
<reference key="1">
    <citation type="journal article" date="2004" name="Proc. Natl. Acad. Sci. U.S.A.">
        <title>The diploid genome sequence of Candida albicans.</title>
        <authorList>
            <person name="Jones T."/>
            <person name="Federspiel N.A."/>
            <person name="Chibana H."/>
            <person name="Dungan J."/>
            <person name="Kalman S."/>
            <person name="Magee B.B."/>
            <person name="Newport G."/>
            <person name="Thorstenson Y.R."/>
            <person name="Agabian N."/>
            <person name="Magee P.T."/>
            <person name="Davis R.W."/>
            <person name="Scherer S."/>
        </authorList>
    </citation>
    <scope>NUCLEOTIDE SEQUENCE [LARGE SCALE GENOMIC DNA]</scope>
    <source>
        <strain>SC5314 / ATCC MYA-2876</strain>
    </source>
</reference>
<reference key="2">
    <citation type="journal article" date="2007" name="Genome Biol.">
        <title>Assembly of the Candida albicans genome into sixteen supercontigs aligned on the eight chromosomes.</title>
        <authorList>
            <person name="van het Hoog M."/>
            <person name="Rast T.J."/>
            <person name="Martchenko M."/>
            <person name="Grindle S."/>
            <person name="Dignard D."/>
            <person name="Hogues H."/>
            <person name="Cuomo C."/>
            <person name="Berriman M."/>
            <person name="Scherer S."/>
            <person name="Magee B.B."/>
            <person name="Whiteway M."/>
            <person name="Chibana H."/>
            <person name="Nantel A."/>
            <person name="Magee P.T."/>
        </authorList>
    </citation>
    <scope>GENOME REANNOTATION</scope>
    <source>
        <strain>SC5314 / ATCC MYA-2876</strain>
    </source>
</reference>
<reference key="3">
    <citation type="journal article" date="2013" name="Genome Biol.">
        <title>Assembly of a phased diploid Candida albicans genome facilitates allele-specific measurements and provides a simple model for repeat and indel structure.</title>
        <authorList>
            <person name="Muzzey D."/>
            <person name="Schwartz K."/>
            <person name="Weissman J.S."/>
            <person name="Sherlock G."/>
        </authorList>
    </citation>
    <scope>NUCLEOTIDE SEQUENCE [LARGE SCALE GENOMIC DNA]</scope>
    <scope>GENOME REANNOTATION</scope>
    <source>
        <strain>SC5314 / ATCC MYA-2876</strain>
    </source>
</reference>
<reference key="4">
    <citation type="journal article" date="2003" name="EMBO J.">
        <title>Haploinsufficiency-based large-scale forward genetic analysis of filamentous growth in the diploid human fungal pathogen C.albicans.</title>
        <authorList>
            <person name="Uhl M.A."/>
            <person name="Biery M."/>
            <person name="Craig N."/>
            <person name="Johnson A.D."/>
        </authorList>
    </citation>
    <scope>FUNCTION</scope>
    <scope>DISRUPTION PHENOTYPE</scope>
</reference>
<reference key="5">
    <citation type="journal article" date="2005" name="Antimicrob. Agents Chemother.">
        <title>Genome-wide expression profiling of the response to azole, polyene, echinocandin, and pyrimidine antifungal agents in Candida albicans.</title>
        <authorList>
            <person name="Liu T.T."/>
            <person name="Lee R.E."/>
            <person name="Barker K.S."/>
            <person name="Lee R.E."/>
            <person name="Wei L."/>
            <person name="Homayouni R."/>
            <person name="Rogers P.D."/>
        </authorList>
    </citation>
    <scope>INDUCTION</scope>
</reference>
<reference key="6">
    <citation type="journal article" date="2006" name="PLoS Pathog.">
        <title>Control of the C. albicans cell wall damage response by transcriptional regulator Cas5.</title>
        <authorList>
            <person name="Bruno V.M."/>
            <person name="Kalachikov S."/>
            <person name="Subaran R."/>
            <person name="Nobile C.J."/>
            <person name="Kyratsous C."/>
            <person name="Mitchell A.P."/>
        </authorList>
    </citation>
    <scope>DISRUPTION PHENOTYPE</scope>
</reference>
<gene>
    <name type="primary">FGR15</name>
    <name type="synonym">CAS2</name>
    <name type="ordered locus">CAALFM_C200720CA</name>
    <name type="ORF">CaO19.2054</name>
    <name type="ORF">CaO19.9601</name>
</gene>
<feature type="chain" id="PRO_0000426063" description="Filamentous growth regulator 15">
    <location>
        <begin position="1"/>
        <end position="518"/>
    </location>
</feature>
<feature type="zinc finger region" description="C2H2-type" evidence="1">
    <location>
        <begin position="374"/>
        <end position="406"/>
    </location>
</feature>
<feature type="region of interest" description="Disordered" evidence="2">
    <location>
        <begin position="1"/>
        <end position="63"/>
    </location>
</feature>
<feature type="region of interest" description="Disordered" evidence="2">
    <location>
        <begin position="75"/>
        <end position="101"/>
    </location>
</feature>
<feature type="region of interest" description="Disordered" evidence="2">
    <location>
        <begin position="261"/>
        <end position="307"/>
    </location>
</feature>
<feature type="region of interest" description="Disordered" evidence="2">
    <location>
        <begin position="492"/>
        <end position="518"/>
    </location>
</feature>
<feature type="compositionally biased region" description="Polar residues" evidence="2">
    <location>
        <begin position="1"/>
        <end position="41"/>
    </location>
</feature>
<feature type="compositionally biased region" description="Low complexity" evidence="2">
    <location>
        <begin position="42"/>
        <end position="52"/>
    </location>
</feature>
<feature type="compositionally biased region" description="Polar residues" evidence="2">
    <location>
        <begin position="77"/>
        <end position="95"/>
    </location>
</feature>
<feature type="compositionally biased region" description="Basic residues" evidence="2">
    <location>
        <begin position="262"/>
        <end position="274"/>
    </location>
</feature>
<feature type="compositionally biased region" description="Low complexity" evidence="2">
    <location>
        <begin position="283"/>
        <end position="298"/>
    </location>
</feature>
<feature type="compositionally biased region" description="Acidic residues" evidence="2">
    <location>
        <begin position="505"/>
        <end position="518"/>
    </location>
</feature>
<name>FGR15_CANAL</name>
<accession>Q5AD13</accession>
<accession>A0A1D8PG61</accession>
<dbReference type="EMBL" id="CP017624">
    <property type="protein sequence ID" value="AOW27124.1"/>
    <property type="molecule type" value="Genomic_DNA"/>
</dbReference>
<dbReference type="RefSeq" id="XP_719503.2">
    <property type="nucleotide sequence ID" value="XM_714410.2"/>
</dbReference>
<dbReference type="BioGRID" id="1221845">
    <property type="interactions" value="1"/>
</dbReference>
<dbReference type="STRING" id="237561.Q5AD13"/>
<dbReference type="EnsemblFungi" id="C2_00720C_A-T">
    <property type="protein sequence ID" value="C2_00720C_A-T-p1"/>
    <property type="gene ID" value="C2_00720C_A"/>
</dbReference>
<dbReference type="GeneID" id="3638882"/>
<dbReference type="KEGG" id="cal:CAALFM_C200720CA"/>
<dbReference type="CGD" id="CAL0000192685">
    <property type="gene designation" value="FGR15"/>
</dbReference>
<dbReference type="VEuPathDB" id="FungiDB:C2_00720C_A"/>
<dbReference type="eggNOG" id="ENOG502R8YW">
    <property type="taxonomic scope" value="Eukaryota"/>
</dbReference>
<dbReference type="HOGENOM" id="CLU_032145_0_0_1"/>
<dbReference type="InParanoid" id="Q5AD13"/>
<dbReference type="OrthoDB" id="6910977at2759"/>
<dbReference type="PRO" id="PR:Q5AD13"/>
<dbReference type="Proteomes" id="UP000000559">
    <property type="component" value="Chromosome 2"/>
</dbReference>
<dbReference type="GO" id="GO:0005634">
    <property type="term" value="C:nucleus"/>
    <property type="evidence" value="ECO:0007669"/>
    <property type="project" value="UniProtKB-SubCell"/>
</dbReference>
<dbReference type="GO" id="GO:0001216">
    <property type="term" value="F:DNA-binding transcription activator activity"/>
    <property type="evidence" value="ECO:0000315"/>
    <property type="project" value="CGD"/>
</dbReference>
<dbReference type="GO" id="GO:0008270">
    <property type="term" value="F:zinc ion binding"/>
    <property type="evidence" value="ECO:0007669"/>
    <property type="project" value="UniProtKB-KW"/>
</dbReference>
<dbReference type="GO" id="GO:0009267">
    <property type="term" value="P:cellular response to starvation"/>
    <property type="evidence" value="ECO:0000315"/>
    <property type="project" value="CGD"/>
</dbReference>
<dbReference type="GO" id="GO:0030447">
    <property type="term" value="P:filamentous growth"/>
    <property type="evidence" value="ECO:0000315"/>
    <property type="project" value="CGD"/>
</dbReference>
<dbReference type="GO" id="GO:0036180">
    <property type="term" value="P:filamentous growth of a population of unicellular organisms in response to biotic stimulus"/>
    <property type="evidence" value="ECO:0000315"/>
    <property type="project" value="CGD"/>
</dbReference>
<dbReference type="GO" id="GO:0036170">
    <property type="term" value="P:filamentous growth of a population of unicellular organisms in response to starvation"/>
    <property type="evidence" value="ECO:0000315"/>
    <property type="project" value="CGD"/>
</dbReference>
<dbReference type="GO" id="GO:1900445">
    <property type="term" value="P:positive regulation of filamentous growth of a population of unicellular organisms in response to biotic stimulus"/>
    <property type="evidence" value="ECO:0000315"/>
    <property type="project" value="CGD"/>
</dbReference>
<dbReference type="Gene3D" id="3.30.160.60">
    <property type="entry name" value="Classic Zinc Finger"/>
    <property type="match status" value="1"/>
</dbReference>
<dbReference type="InterPro" id="IPR013087">
    <property type="entry name" value="Znf_C2H2_type"/>
</dbReference>
<dbReference type="PROSITE" id="PS50157">
    <property type="entry name" value="ZINC_FINGER_C2H2_2"/>
    <property type="match status" value="1"/>
</dbReference>
<keyword id="KW-0479">Metal-binding</keyword>
<keyword id="KW-0539">Nucleus</keyword>
<keyword id="KW-1185">Reference proteome</keyword>
<keyword id="KW-0862">Zinc</keyword>
<keyword id="KW-0863">Zinc-finger</keyword>
<comment type="function">
    <text evidence="3">Probable transcription factor involved in the regulation of filamentous growth.</text>
</comment>
<comment type="subcellular location">
    <subcellularLocation>
        <location evidence="6">Nucleus</location>
    </subcellularLocation>
</comment>
<comment type="induction">
    <text evidence="4">Induced by caspofungin.</text>
</comment>
<comment type="disruption phenotype">
    <text evidence="3 5">Affects filamentous growths and leads to hypersensitivity to caspofungin.</text>
</comment>
<proteinExistence type="evidence at transcript level"/>
<sequence>MESTLSVSDEKLTNSSTALNNCGDNKESSQVLTTANTTTDNQQVQPKSQHQQSASTEPLSKERTNISLENDLILVDPNQQSKNTVSDSVQDTTGVPSDHGKQQTIGDQIKILISSNPLNIEEYSSHLNRLATILYEENFTSDFLVTLHYKILQLMDELPKFVDLQNPLKSQLYTIIDKNFDILIKLATNYKVMEVSTASIRFLTTVFMNLNYWEVYNLLNKKPVLYHFLNLIEFDLNDCYTRFINDYQRFTYDKITQPTVKSRSRSKVTKKRKVKGDSDFAGSNTATATTSVTTPDANTSHEGKQHRSEAFFSLNPDTSDHDKYVADVISGANVQKRKFRPDVKLEHHRIIKKPQPAADKLSTKSSNYDPDVIHECQLPSAEEPHKLCLRRFSRKYELIRHQETVHSKKKKLFKCFVCVKQNPGVGPRIFTRHDTLAKHIRVNHKISGKEAKAEVAYSKKHAEVVEEGDITVHVGRRKTKVDFELRAHMEKRKSSGDDTNYMETSDLESGEEEVTFNK</sequence>
<protein>
    <recommendedName>
        <fullName>Filamentous growth regulator 15</fullName>
    </recommendedName>
    <alternativeName>
        <fullName>Caspofungin sensitivity protein 2</fullName>
    </alternativeName>
</protein>
<organism>
    <name type="scientific">Candida albicans (strain SC5314 / ATCC MYA-2876)</name>
    <name type="common">Yeast</name>
    <dbReference type="NCBI Taxonomy" id="237561"/>
    <lineage>
        <taxon>Eukaryota</taxon>
        <taxon>Fungi</taxon>
        <taxon>Dikarya</taxon>
        <taxon>Ascomycota</taxon>
        <taxon>Saccharomycotina</taxon>
        <taxon>Pichiomycetes</taxon>
        <taxon>Debaryomycetaceae</taxon>
        <taxon>Candida/Lodderomyces clade</taxon>
        <taxon>Candida</taxon>
    </lineage>
</organism>